<feature type="chain" id="PRO_1000084713" description="tRNA pseudouridine synthase B">
    <location>
        <begin position="1"/>
        <end position="312"/>
    </location>
</feature>
<feature type="active site" description="Nucleophile" evidence="1">
    <location>
        <position position="47"/>
    </location>
</feature>
<protein>
    <recommendedName>
        <fullName evidence="1">tRNA pseudouridine synthase B</fullName>
        <ecNumber evidence="1">5.4.99.25</ecNumber>
    </recommendedName>
    <alternativeName>
        <fullName evidence="1">tRNA pseudouridine(55) synthase</fullName>
        <shortName evidence="1">Psi55 synthase</shortName>
    </alternativeName>
    <alternativeName>
        <fullName evidence="1">tRNA pseudouridylate synthase</fullName>
    </alternativeName>
    <alternativeName>
        <fullName evidence="1">tRNA-uridine isomerase</fullName>
    </alternativeName>
</protein>
<comment type="function">
    <text evidence="1">Responsible for synthesis of pseudouridine from uracil-55 in the psi GC loop of transfer RNAs.</text>
</comment>
<comment type="catalytic activity">
    <reaction evidence="1">
        <text>uridine(55) in tRNA = pseudouridine(55) in tRNA</text>
        <dbReference type="Rhea" id="RHEA:42532"/>
        <dbReference type="Rhea" id="RHEA-COMP:10101"/>
        <dbReference type="Rhea" id="RHEA-COMP:10102"/>
        <dbReference type="ChEBI" id="CHEBI:65314"/>
        <dbReference type="ChEBI" id="CHEBI:65315"/>
        <dbReference type="EC" id="5.4.99.25"/>
    </reaction>
</comment>
<comment type="similarity">
    <text evidence="1">Belongs to the pseudouridine synthase TruB family. Type 1 subfamily.</text>
</comment>
<proteinExistence type="inferred from homology"/>
<accession>A5F928</accession>
<accession>C3LXV6</accession>
<dbReference type="EC" id="5.4.99.25" evidence="1"/>
<dbReference type="EMBL" id="CP000627">
    <property type="protein sequence ID" value="ABQ21562.1"/>
    <property type="molecule type" value="Genomic_DNA"/>
</dbReference>
<dbReference type="EMBL" id="CP001235">
    <property type="protein sequence ID" value="ACP08680.1"/>
    <property type="molecule type" value="Genomic_DNA"/>
</dbReference>
<dbReference type="RefSeq" id="WP_000252417.1">
    <property type="nucleotide sequence ID" value="NZ_JAACZH010000006.1"/>
</dbReference>
<dbReference type="SMR" id="A5F928"/>
<dbReference type="KEGG" id="vco:VC0395_A0176"/>
<dbReference type="KEGG" id="vcr:VC395_0662"/>
<dbReference type="PATRIC" id="fig|345073.21.peg.643"/>
<dbReference type="eggNOG" id="COG0130">
    <property type="taxonomic scope" value="Bacteria"/>
</dbReference>
<dbReference type="HOGENOM" id="CLU_032087_0_3_6"/>
<dbReference type="OrthoDB" id="9802309at2"/>
<dbReference type="Proteomes" id="UP000000249">
    <property type="component" value="Chromosome 2"/>
</dbReference>
<dbReference type="GO" id="GO:0003723">
    <property type="term" value="F:RNA binding"/>
    <property type="evidence" value="ECO:0007669"/>
    <property type="project" value="InterPro"/>
</dbReference>
<dbReference type="GO" id="GO:0160148">
    <property type="term" value="F:tRNA pseudouridine(55) synthase activity"/>
    <property type="evidence" value="ECO:0007669"/>
    <property type="project" value="UniProtKB-EC"/>
</dbReference>
<dbReference type="GO" id="GO:1990481">
    <property type="term" value="P:mRNA pseudouridine synthesis"/>
    <property type="evidence" value="ECO:0007669"/>
    <property type="project" value="TreeGrafter"/>
</dbReference>
<dbReference type="GO" id="GO:0031119">
    <property type="term" value="P:tRNA pseudouridine synthesis"/>
    <property type="evidence" value="ECO:0007669"/>
    <property type="project" value="UniProtKB-UniRule"/>
</dbReference>
<dbReference type="CDD" id="cd02573">
    <property type="entry name" value="PseudoU_synth_EcTruB"/>
    <property type="match status" value="1"/>
</dbReference>
<dbReference type="CDD" id="cd21152">
    <property type="entry name" value="PUA_TruB_bacterial"/>
    <property type="match status" value="1"/>
</dbReference>
<dbReference type="FunFam" id="2.30.130.10:FF:000004">
    <property type="entry name" value="tRNA pseudouridine synthase B"/>
    <property type="match status" value="1"/>
</dbReference>
<dbReference type="FunFam" id="3.30.2350.10:FF:000003">
    <property type="entry name" value="tRNA pseudouridine synthase B"/>
    <property type="match status" value="1"/>
</dbReference>
<dbReference type="Gene3D" id="3.30.2350.10">
    <property type="entry name" value="Pseudouridine synthase"/>
    <property type="match status" value="1"/>
</dbReference>
<dbReference type="Gene3D" id="2.30.130.10">
    <property type="entry name" value="PUA domain"/>
    <property type="match status" value="1"/>
</dbReference>
<dbReference type="HAMAP" id="MF_01080">
    <property type="entry name" value="TruB_bact"/>
    <property type="match status" value="1"/>
</dbReference>
<dbReference type="InterPro" id="IPR020103">
    <property type="entry name" value="PsdUridine_synth_cat_dom_sf"/>
</dbReference>
<dbReference type="InterPro" id="IPR002501">
    <property type="entry name" value="PsdUridine_synth_N"/>
</dbReference>
<dbReference type="InterPro" id="IPR015947">
    <property type="entry name" value="PUA-like_sf"/>
</dbReference>
<dbReference type="InterPro" id="IPR036974">
    <property type="entry name" value="PUA_sf"/>
</dbReference>
<dbReference type="InterPro" id="IPR014780">
    <property type="entry name" value="tRNA_psdUridine_synth_TruB"/>
</dbReference>
<dbReference type="InterPro" id="IPR015240">
    <property type="entry name" value="tRNA_sdUridine_synth_fam1_C"/>
</dbReference>
<dbReference type="InterPro" id="IPR032819">
    <property type="entry name" value="TruB_C"/>
</dbReference>
<dbReference type="NCBIfam" id="TIGR00431">
    <property type="entry name" value="TruB"/>
    <property type="match status" value="1"/>
</dbReference>
<dbReference type="PANTHER" id="PTHR13767:SF2">
    <property type="entry name" value="PSEUDOURIDYLATE SYNTHASE TRUB1"/>
    <property type="match status" value="1"/>
</dbReference>
<dbReference type="PANTHER" id="PTHR13767">
    <property type="entry name" value="TRNA-PSEUDOURIDINE SYNTHASE"/>
    <property type="match status" value="1"/>
</dbReference>
<dbReference type="Pfam" id="PF09157">
    <property type="entry name" value="TruB-C_2"/>
    <property type="match status" value="1"/>
</dbReference>
<dbReference type="Pfam" id="PF16198">
    <property type="entry name" value="TruB_C_2"/>
    <property type="match status" value="1"/>
</dbReference>
<dbReference type="Pfam" id="PF01509">
    <property type="entry name" value="TruB_N"/>
    <property type="match status" value="1"/>
</dbReference>
<dbReference type="SUPFAM" id="SSF55120">
    <property type="entry name" value="Pseudouridine synthase"/>
    <property type="match status" value="1"/>
</dbReference>
<dbReference type="SUPFAM" id="SSF88697">
    <property type="entry name" value="PUA domain-like"/>
    <property type="match status" value="1"/>
</dbReference>
<organism>
    <name type="scientific">Vibrio cholerae serotype O1 (strain ATCC 39541 / Classical Ogawa 395 / O395)</name>
    <dbReference type="NCBI Taxonomy" id="345073"/>
    <lineage>
        <taxon>Bacteria</taxon>
        <taxon>Pseudomonadati</taxon>
        <taxon>Pseudomonadota</taxon>
        <taxon>Gammaproteobacteria</taxon>
        <taxon>Vibrionales</taxon>
        <taxon>Vibrionaceae</taxon>
        <taxon>Vibrio</taxon>
    </lineage>
</organism>
<gene>
    <name evidence="1" type="primary">truB</name>
    <name type="ordered locus">VC0395_A0176</name>
    <name type="ordered locus">VC395_0662</name>
</gene>
<reference key="1">
    <citation type="submission" date="2007-03" db="EMBL/GenBank/DDBJ databases">
        <authorList>
            <person name="Heidelberg J."/>
        </authorList>
    </citation>
    <scope>NUCLEOTIDE SEQUENCE [LARGE SCALE GENOMIC DNA]</scope>
    <source>
        <strain>ATCC 39541 / Classical Ogawa 395 / O395</strain>
    </source>
</reference>
<reference key="2">
    <citation type="journal article" date="2008" name="PLoS ONE">
        <title>A recalibrated molecular clock and independent origins for the cholera pandemic clones.</title>
        <authorList>
            <person name="Feng L."/>
            <person name="Reeves P.R."/>
            <person name="Lan R."/>
            <person name="Ren Y."/>
            <person name="Gao C."/>
            <person name="Zhou Z."/>
            <person name="Ren Y."/>
            <person name="Cheng J."/>
            <person name="Wang W."/>
            <person name="Wang J."/>
            <person name="Qian W."/>
            <person name="Li D."/>
            <person name="Wang L."/>
        </authorList>
    </citation>
    <scope>NUCLEOTIDE SEQUENCE [LARGE SCALE GENOMIC DNA]</scope>
    <source>
        <strain>ATCC 39541 / Classical Ogawa 395 / O395</strain>
    </source>
</reference>
<sequence>MVRRRKGRVIHGVILLDKPTGISSNDALQKVKRLYGAEKAGHTGALDPLATGMLPICLGEATKFSQFLLDSDKRYRVIAKLGERTDTSDSDGQVVQTRPVHVDYDTLLACIAKFRGETDQVPSMFSALKYQGRPLYEYARQGIEVPREARKITVYEIELHRFEGDEVEMEVHCSKGTYIRTIVDDLGEMLGCGAHVTMLRRVGVANYPYERMVTLEQLNALVEQAHRDEKAVADVLDPLLLPMDTAVEALPEVNVIPELMTLIQHGQAVQVSGAPSDGMVRITGGEQKLFLGVGEIDDNGKVAPKRLVVYGE</sequence>
<name>TRUB_VIBC3</name>
<keyword id="KW-0413">Isomerase</keyword>
<keyword id="KW-0819">tRNA processing</keyword>
<evidence type="ECO:0000255" key="1">
    <source>
        <dbReference type="HAMAP-Rule" id="MF_01080"/>
    </source>
</evidence>